<keyword id="KW-0687">Ribonucleoprotein</keyword>
<keyword id="KW-0689">Ribosomal protein</keyword>
<keyword id="KW-0694">RNA-binding</keyword>
<keyword id="KW-0699">rRNA-binding</keyword>
<dbReference type="EMBL" id="CP000675">
    <property type="protein sequence ID" value="ABQ54412.1"/>
    <property type="molecule type" value="Genomic_DNA"/>
</dbReference>
<dbReference type="RefSeq" id="WP_010948412.1">
    <property type="nucleotide sequence ID" value="NZ_JAPMSS010000010.1"/>
</dbReference>
<dbReference type="SMR" id="A5IAL2"/>
<dbReference type="GeneID" id="57036713"/>
<dbReference type="KEGG" id="lpc:LPC_0423"/>
<dbReference type="HOGENOM" id="CLU_123265_0_1_6"/>
<dbReference type="GO" id="GO:1990904">
    <property type="term" value="C:ribonucleoprotein complex"/>
    <property type="evidence" value="ECO:0007669"/>
    <property type="project" value="UniProtKB-KW"/>
</dbReference>
<dbReference type="GO" id="GO:0005840">
    <property type="term" value="C:ribosome"/>
    <property type="evidence" value="ECO:0007669"/>
    <property type="project" value="UniProtKB-KW"/>
</dbReference>
<dbReference type="GO" id="GO:0019843">
    <property type="term" value="F:rRNA binding"/>
    <property type="evidence" value="ECO:0007669"/>
    <property type="project" value="UniProtKB-UniRule"/>
</dbReference>
<dbReference type="GO" id="GO:0003735">
    <property type="term" value="F:structural constituent of ribosome"/>
    <property type="evidence" value="ECO:0007669"/>
    <property type="project" value="InterPro"/>
</dbReference>
<dbReference type="GO" id="GO:0000027">
    <property type="term" value="P:ribosomal large subunit assembly"/>
    <property type="evidence" value="ECO:0007669"/>
    <property type="project" value="UniProtKB-UniRule"/>
</dbReference>
<dbReference type="GO" id="GO:0006412">
    <property type="term" value="P:translation"/>
    <property type="evidence" value="ECO:0007669"/>
    <property type="project" value="InterPro"/>
</dbReference>
<dbReference type="CDD" id="cd07026">
    <property type="entry name" value="Ribosomal_L20"/>
    <property type="match status" value="1"/>
</dbReference>
<dbReference type="FunFam" id="1.10.1900.20:FF:000001">
    <property type="entry name" value="50S ribosomal protein L20"/>
    <property type="match status" value="1"/>
</dbReference>
<dbReference type="Gene3D" id="6.10.160.10">
    <property type="match status" value="1"/>
</dbReference>
<dbReference type="Gene3D" id="1.10.1900.20">
    <property type="entry name" value="Ribosomal protein L20"/>
    <property type="match status" value="1"/>
</dbReference>
<dbReference type="HAMAP" id="MF_00382">
    <property type="entry name" value="Ribosomal_bL20"/>
    <property type="match status" value="1"/>
</dbReference>
<dbReference type="InterPro" id="IPR005813">
    <property type="entry name" value="Ribosomal_bL20"/>
</dbReference>
<dbReference type="InterPro" id="IPR049946">
    <property type="entry name" value="RIBOSOMAL_L20_CS"/>
</dbReference>
<dbReference type="InterPro" id="IPR035566">
    <property type="entry name" value="Ribosomal_protein_bL20_C"/>
</dbReference>
<dbReference type="NCBIfam" id="TIGR01032">
    <property type="entry name" value="rplT_bact"/>
    <property type="match status" value="1"/>
</dbReference>
<dbReference type="PANTHER" id="PTHR10986">
    <property type="entry name" value="39S RIBOSOMAL PROTEIN L20"/>
    <property type="match status" value="1"/>
</dbReference>
<dbReference type="Pfam" id="PF00453">
    <property type="entry name" value="Ribosomal_L20"/>
    <property type="match status" value="1"/>
</dbReference>
<dbReference type="PRINTS" id="PR00062">
    <property type="entry name" value="RIBOSOMALL20"/>
</dbReference>
<dbReference type="SUPFAM" id="SSF74731">
    <property type="entry name" value="Ribosomal protein L20"/>
    <property type="match status" value="1"/>
</dbReference>
<dbReference type="PROSITE" id="PS00937">
    <property type="entry name" value="RIBOSOMAL_L20"/>
    <property type="match status" value="1"/>
</dbReference>
<organism>
    <name type="scientific">Legionella pneumophila (strain Corby)</name>
    <dbReference type="NCBI Taxonomy" id="400673"/>
    <lineage>
        <taxon>Bacteria</taxon>
        <taxon>Pseudomonadati</taxon>
        <taxon>Pseudomonadota</taxon>
        <taxon>Gammaproteobacteria</taxon>
        <taxon>Legionellales</taxon>
        <taxon>Legionellaceae</taxon>
        <taxon>Legionella</taxon>
    </lineage>
</organism>
<proteinExistence type="inferred from homology"/>
<evidence type="ECO:0000255" key="1">
    <source>
        <dbReference type="HAMAP-Rule" id="MF_00382"/>
    </source>
</evidence>
<evidence type="ECO:0000305" key="2"/>
<gene>
    <name evidence="1" type="primary">rplT</name>
    <name type="ordered locus">LPC_0423</name>
</gene>
<feature type="chain" id="PRO_1000049002" description="Large ribosomal subunit protein bL20">
    <location>
        <begin position="1"/>
        <end position="119"/>
    </location>
</feature>
<name>RL20_LEGPC</name>
<sequence length="119" mass="13461">MPRVKRGVTAKARHKKILDQAKGYYGARSRTYRVAKQAVIKAGQYAYRDRRQKKRQFRALWITRINAQARECGLSYSRLIDGLKKASIELDRKILADMAVHDKVAFAAIAEQAKAALAG</sequence>
<comment type="function">
    <text evidence="1">Binds directly to 23S ribosomal RNA and is necessary for the in vitro assembly process of the 50S ribosomal subunit. It is not involved in the protein synthesizing functions of that subunit.</text>
</comment>
<comment type="similarity">
    <text evidence="1">Belongs to the bacterial ribosomal protein bL20 family.</text>
</comment>
<reference key="1">
    <citation type="submission" date="2006-11" db="EMBL/GenBank/DDBJ databases">
        <title>Identification and characterization of a new conjugation/ type IVA secretion system (trb/tra) of L. pneumophila Corby localized on a mobile genomic island.</title>
        <authorList>
            <person name="Gloeckner G."/>
            <person name="Albert-Weissenberger C."/>
            <person name="Weinmann E."/>
            <person name="Jacobi S."/>
            <person name="Schunder E."/>
            <person name="Steinert M."/>
            <person name="Buchrieser C."/>
            <person name="Hacker J."/>
            <person name="Heuner K."/>
        </authorList>
    </citation>
    <scope>NUCLEOTIDE SEQUENCE [LARGE SCALE GENOMIC DNA]</scope>
    <source>
        <strain>Corby</strain>
    </source>
</reference>
<accession>A5IAL2</accession>
<protein>
    <recommendedName>
        <fullName evidence="1">Large ribosomal subunit protein bL20</fullName>
    </recommendedName>
    <alternativeName>
        <fullName evidence="2">50S ribosomal protein L20</fullName>
    </alternativeName>
</protein>